<evidence type="ECO:0000255" key="1">
    <source>
        <dbReference type="HAMAP-Rule" id="MF_01300"/>
    </source>
</evidence>
<evidence type="ECO:0000256" key="2">
    <source>
        <dbReference type="SAM" id="MobiDB-lite"/>
    </source>
</evidence>
<protein>
    <recommendedName>
        <fullName evidence="1">C4-dicarboxylate transport protein</fullName>
    </recommendedName>
</protein>
<proteinExistence type="inferred from homology"/>
<name>DCTA_PSEE4</name>
<keyword id="KW-0997">Cell inner membrane</keyword>
<keyword id="KW-1003">Cell membrane</keyword>
<keyword id="KW-0472">Membrane</keyword>
<keyword id="KW-0769">Symport</keyword>
<keyword id="KW-0812">Transmembrane</keyword>
<keyword id="KW-1133">Transmembrane helix</keyword>
<keyword id="KW-0813">Transport</keyword>
<sequence length="440" mass="46275">MTKRQPLYKSLYVQVLVAITIGILLGHYYPETGVALKPLGDGFVKLIKMVIAPIIFCTVVSGIAGMQSMKSVGKTGGYALLYFEIVSTIALIIGLVVVNVVQPGAGMHVDVSTLNASSVAAYAAAGAQQTTVGFLLNVIPNTVVGAFANGDILQVLMFSVLFGFALHRLGSYGKPVLDLIDRFAHVMFNIINMIMKLAPIGAFGAMAFTIGQYGVGSLVQLGYLMACFYITCILFVLVVLGGICRAHGFSVIKLIRYIREELLIVLGTSSSESALPRMLAKMERLGAKKSVVGLVIPTGYSFNLDGTSIYLTMAAVFIAQATDTTMDITHQITLLLVLLVASKGAAGVTGSGFIVLAATLSAVGHLPVAGLALILGIDRFMSEARALTNLIGNAVATVVVAKWVKELDTDQLQAELASGGSPLVDTRPTDDLGVAEGPAR</sequence>
<organism>
    <name type="scientific">Pseudomonas entomophila (strain L48)</name>
    <dbReference type="NCBI Taxonomy" id="384676"/>
    <lineage>
        <taxon>Bacteria</taxon>
        <taxon>Pseudomonadati</taxon>
        <taxon>Pseudomonadota</taxon>
        <taxon>Gammaproteobacteria</taxon>
        <taxon>Pseudomonadales</taxon>
        <taxon>Pseudomonadaceae</taxon>
        <taxon>Pseudomonas</taxon>
    </lineage>
</organism>
<reference key="1">
    <citation type="journal article" date="2006" name="Nat. Biotechnol.">
        <title>Complete genome sequence of the entomopathogenic and metabolically versatile soil bacterium Pseudomonas entomophila.</title>
        <authorList>
            <person name="Vodovar N."/>
            <person name="Vallenet D."/>
            <person name="Cruveiller S."/>
            <person name="Rouy Z."/>
            <person name="Barbe V."/>
            <person name="Acosta C."/>
            <person name="Cattolico L."/>
            <person name="Jubin C."/>
            <person name="Lajus A."/>
            <person name="Segurens B."/>
            <person name="Vacherie B."/>
            <person name="Wincker P."/>
            <person name="Weissenbach J."/>
            <person name="Lemaitre B."/>
            <person name="Medigue C."/>
            <person name="Boccard F."/>
        </authorList>
    </citation>
    <scope>NUCLEOTIDE SEQUENCE [LARGE SCALE GENOMIC DNA]</scope>
    <source>
        <strain>L48</strain>
    </source>
</reference>
<dbReference type="EMBL" id="CT573326">
    <property type="protein sequence ID" value="CAK14224.1"/>
    <property type="molecule type" value="Genomic_DNA"/>
</dbReference>
<dbReference type="RefSeq" id="WP_011532640.1">
    <property type="nucleotide sequence ID" value="NC_008027.1"/>
</dbReference>
<dbReference type="SMR" id="Q1IDN5"/>
<dbReference type="STRING" id="384676.PSEEN1347"/>
<dbReference type="GeneID" id="32804611"/>
<dbReference type="KEGG" id="pen:PSEEN1347"/>
<dbReference type="eggNOG" id="COG1301">
    <property type="taxonomic scope" value="Bacteria"/>
</dbReference>
<dbReference type="HOGENOM" id="CLU_019375_7_0_6"/>
<dbReference type="OrthoDB" id="9766690at2"/>
<dbReference type="Proteomes" id="UP000000658">
    <property type="component" value="Chromosome"/>
</dbReference>
<dbReference type="GO" id="GO:0005886">
    <property type="term" value="C:plasma membrane"/>
    <property type="evidence" value="ECO:0007669"/>
    <property type="project" value="UniProtKB-SubCell"/>
</dbReference>
<dbReference type="GO" id="GO:0015138">
    <property type="term" value="F:fumarate transmembrane transporter activity"/>
    <property type="evidence" value="ECO:0007669"/>
    <property type="project" value="TreeGrafter"/>
</dbReference>
<dbReference type="GO" id="GO:0015366">
    <property type="term" value="F:malate:proton symporter activity"/>
    <property type="evidence" value="ECO:0007669"/>
    <property type="project" value="TreeGrafter"/>
</dbReference>
<dbReference type="GO" id="GO:0015141">
    <property type="term" value="F:succinate transmembrane transporter activity"/>
    <property type="evidence" value="ECO:0007669"/>
    <property type="project" value="TreeGrafter"/>
</dbReference>
<dbReference type="GO" id="GO:0070778">
    <property type="term" value="P:L-aspartate transmembrane transport"/>
    <property type="evidence" value="ECO:0007669"/>
    <property type="project" value="TreeGrafter"/>
</dbReference>
<dbReference type="FunFam" id="1.10.3860.10:FF:000001">
    <property type="entry name" value="C4-dicarboxylate transport protein"/>
    <property type="match status" value="1"/>
</dbReference>
<dbReference type="Gene3D" id="1.10.3860.10">
    <property type="entry name" value="Sodium:dicarboxylate symporter"/>
    <property type="match status" value="1"/>
</dbReference>
<dbReference type="HAMAP" id="MF_01300">
    <property type="entry name" value="C4_dicarb_transport"/>
    <property type="match status" value="1"/>
</dbReference>
<dbReference type="InterPro" id="IPR023954">
    <property type="entry name" value="C4_dicarb_transport"/>
</dbReference>
<dbReference type="InterPro" id="IPR001991">
    <property type="entry name" value="Na-dicarboxylate_symporter"/>
</dbReference>
<dbReference type="InterPro" id="IPR018107">
    <property type="entry name" value="Na-dicarboxylate_symporter_CS"/>
</dbReference>
<dbReference type="InterPro" id="IPR036458">
    <property type="entry name" value="Na:dicarbo_symporter_sf"/>
</dbReference>
<dbReference type="NCBIfam" id="NF002461">
    <property type="entry name" value="PRK01663.1"/>
    <property type="match status" value="1"/>
</dbReference>
<dbReference type="NCBIfam" id="NF009587">
    <property type="entry name" value="PRK13027.1"/>
    <property type="match status" value="1"/>
</dbReference>
<dbReference type="PANTHER" id="PTHR42865:SF1">
    <property type="entry name" value="AEROBIC C4-DICARBOXYLATE TRANSPORT PROTEIN"/>
    <property type="match status" value="1"/>
</dbReference>
<dbReference type="PANTHER" id="PTHR42865">
    <property type="entry name" value="PROTON/GLUTAMATE-ASPARTATE SYMPORTER"/>
    <property type="match status" value="1"/>
</dbReference>
<dbReference type="Pfam" id="PF00375">
    <property type="entry name" value="SDF"/>
    <property type="match status" value="1"/>
</dbReference>
<dbReference type="PRINTS" id="PR00173">
    <property type="entry name" value="EDTRNSPORT"/>
</dbReference>
<dbReference type="SUPFAM" id="SSF118215">
    <property type="entry name" value="Proton glutamate symport protein"/>
    <property type="match status" value="1"/>
</dbReference>
<dbReference type="PROSITE" id="PS00713">
    <property type="entry name" value="NA_DICARBOXYL_SYMP_1"/>
    <property type="match status" value="1"/>
</dbReference>
<dbReference type="PROSITE" id="PS00714">
    <property type="entry name" value="NA_DICARBOXYL_SYMP_2"/>
    <property type="match status" value="1"/>
</dbReference>
<comment type="function">
    <text evidence="1">Responsible for the transport of dicarboxylates such as succinate, fumarate, and malate from the periplasm across the membrane.</text>
</comment>
<comment type="subcellular location">
    <subcellularLocation>
        <location evidence="1">Cell inner membrane</location>
        <topology evidence="1">Multi-pass membrane protein</topology>
    </subcellularLocation>
</comment>
<comment type="similarity">
    <text evidence="1">Belongs to the dicarboxylate/amino acid:cation symporter (DAACS) (TC 2.A.23) family.</text>
</comment>
<accession>Q1IDN5</accession>
<gene>
    <name evidence="1" type="primary">dctA</name>
    <name type="ordered locus">PSEEN1347</name>
</gene>
<feature type="chain" id="PRO_1000067454" description="C4-dicarboxylate transport protein">
    <location>
        <begin position="1"/>
        <end position="440"/>
    </location>
</feature>
<feature type="transmembrane region" description="Helical" evidence="1">
    <location>
        <begin position="15"/>
        <end position="35"/>
    </location>
</feature>
<feature type="transmembrane region" description="Helical" evidence="1">
    <location>
        <begin position="46"/>
        <end position="66"/>
    </location>
</feature>
<feature type="transmembrane region" description="Helical" evidence="1">
    <location>
        <begin position="78"/>
        <end position="98"/>
    </location>
</feature>
<feature type="transmembrane region" description="Helical" evidence="1">
    <location>
        <begin position="146"/>
        <end position="166"/>
    </location>
</feature>
<feature type="transmembrane region" description="Helical" evidence="1">
    <location>
        <begin position="190"/>
        <end position="210"/>
    </location>
</feature>
<feature type="transmembrane region" description="Helical" evidence="1">
    <location>
        <begin position="224"/>
        <end position="244"/>
    </location>
</feature>
<feature type="transmembrane region" description="Helical" evidence="1">
    <location>
        <begin position="291"/>
        <end position="311"/>
    </location>
</feature>
<feature type="transmembrane region" description="Helical" evidence="1">
    <location>
        <begin position="332"/>
        <end position="352"/>
    </location>
</feature>
<feature type="transmembrane region" description="Helical" evidence="1">
    <location>
        <begin position="354"/>
        <end position="374"/>
    </location>
</feature>
<feature type="region of interest" description="Disordered" evidence="2">
    <location>
        <begin position="419"/>
        <end position="440"/>
    </location>
</feature>